<feature type="chain" id="PRO_1000193818" description="Large ribosomal subunit protein bL19">
    <location>
        <begin position="1"/>
        <end position="130"/>
    </location>
</feature>
<comment type="function">
    <text evidence="1">This protein is located at the 30S-50S ribosomal subunit interface and may play a role in the structure and function of the aminoacyl-tRNA binding site.</text>
</comment>
<comment type="similarity">
    <text evidence="1">Belongs to the bacterial ribosomal protein bL19 family.</text>
</comment>
<gene>
    <name evidence="1" type="primary">rplS</name>
    <name type="ordered locus">RALTA_A0808</name>
</gene>
<accession>B3R399</accession>
<evidence type="ECO:0000255" key="1">
    <source>
        <dbReference type="HAMAP-Rule" id="MF_00402"/>
    </source>
</evidence>
<evidence type="ECO:0000305" key="2"/>
<dbReference type="EMBL" id="CU633749">
    <property type="protein sequence ID" value="CAQ68780.1"/>
    <property type="molecule type" value="Genomic_DNA"/>
</dbReference>
<dbReference type="RefSeq" id="WP_012352117.1">
    <property type="nucleotide sequence ID" value="NC_010528.1"/>
</dbReference>
<dbReference type="SMR" id="B3R399"/>
<dbReference type="GeneID" id="29760523"/>
<dbReference type="KEGG" id="cti:RALTA_A0808"/>
<dbReference type="eggNOG" id="COG0335">
    <property type="taxonomic scope" value="Bacteria"/>
</dbReference>
<dbReference type="HOGENOM" id="CLU_103507_1_0_4"/>
<dbReference type="BioCyc" id="CTAI977880:RALTA_RS03900-MONOMER"/>
<dbReference type="Proteomes" id="UP000001692">
    <property type="component" value="Chromosome 1"/>
</dbReference>
<dbReference type="GO" id="GO:0022625">
    <property type="term" value="C:cytosolic large ribosomal subunit"/>
    <property type="evidence" value="ECO:0007669"/>
    <property type="project" value="TreeGrafter"/>
</dbReference>
<dbReference type="GO" id="GO:0003735">
    <property type="term" value="F:structural constituent of ribosome"/>
    <property type="evidence" value="ECO:0007669"/>
    <property type="project" value="InterPro"/>
</dbReference>
<dbReference type="GO" id="GO:0006412">
    <property type="term" value="P:translation"/>
    <property type="evidence" value="ECO:0007669"/>
    <property type="project" value="UniProtKB-UniRule"/>
</dbReference>
<dbReference type="FunFam" id="2.30.30.790:FF:000001">
    <property type="entry name" value="50S ribosomal protein L19"/>
    <property type="match status" value="1"/>
</dbReference>
<dbReference type="Gene3D" id="2.30.30.790">
    <property type="match status" value="1"/>
</dbReference>
<dbReference type="HAMAP" id="MF_00402">
    <property type="entry name" value="Ribosomal_bL19"/>
    <property type="match status" value="1"/>
</dbReference>
<dbReference type="InterPro" id="IPR001857">
    <property type="entry name" value="Ribosomal_bL19"/>
</dbReference>
<dbReference type="InterPro" id="IPR018257">
    <property type="entry name" value="Ribosomal_bL19_CS"/>
</dbReference>
<dbReference type="InterPro" id="IPR038657">
    <property type="entry name" value="Ribosomal_bL19_sf"/>
</dbReference>
<dbReference type="InterPro" id="IPR008991">
    <property type="entry name" value="Translation_prot_SH3-like_sf"/>
</dbReference>
<dbReference type="NCBIfam" id="TIGR01024">
    <property type="entry name" value="rplS_bact"/>
    <property type="match status" value="1"/>
</dbReference>
<dbReference type="PANTHER" id="PTHR15680:SF9">
    <property type="entry name" value="LARGE RIBOSOMAL SUBUNIT PROTEIN BL19M"/>
    <property type="match status" value="1"/>
</dbReference>
<dbReference type="PANTHER" id="PTHR15680">
    <property type="entry name" value="RIBOSOMAL PROTEIN L19"/>
    <property type="match status" value="1"/>
</dbReference>
<dbReference type="Pfam" id="PF01245">
    <property type="entry name" value="Ribosomal_L19"/>
    <property type="match status" value="1"/>
</dbReference>
<dbReference type="PIRSF" id="PIRSF002191">
    <property type="entry name" value="Ribosomal_L19"/>
    <property type="match status" value="1"/>
</dbReference>
<dbReference type="PRINTS" id="PR00061">
    <property type="entry name" value="RIBOSOMALL19"/>
</dbReference>
<dbReference type="SUPFAM" id="SSF50104">
    <property type="entry name" value="Translation proteins SH3-like domain"/>
    <property type="match status" value="1"/>
</dbReference>
<dbReference type="PROSITE" id="PS01015">
    <property type="entry name" value="RIBOSOMAL_L19"/>
    <property type="match status" value="1"/>
</dbReference>
<reference key="1">
    <citation type="journal article" date="2008" name="Genome Res.">
        <title>Genome sequence of the beta-rhizobium Cupriavidus taiwanensis and comparative genomics of rhizobia.</title>
        <authorList>
            <person name="Amadou C."/>
            <person name="Pascal G."/>
            <person name="Mangenot S."/>
            <person name="Glew M."/>
            <person name="Bontemps C."/>
            <person name="Capela D."/>
            <person name="Carrere S."/>
            <person name="Cruveiller S."/>
            <person name="Dossat C."/>
            <person name="Lajus A."/>
            <person name="Marchetti M."/>
            <person name="Poinsot V."/>
            <person name="Rouy Z."/>
            <person name="Servin B."/>
            <person name="Saad M."/>
            <person name="Schenowitz C."/>
            <person name="Barbe V."/>
            <person name="Batut J."/>
            <person name="Medigue C."/>
            <person name="Masson-Boivin C."/>
        </authorList>
    </citation>
    <scope>NUCLEOTIDE SEQUENCE [LARGE SCALE GENOMIC DNA]</scope>
    <source>
        <strain>DSM 17343 / BCRC 17206 / CCUG 44338 / CIP 107171 / LMG 19424 / R1</strain>
    </source>
</reference>
<name>RL19_CUPTR</name>
<proteinExistence type="inferred from homology"/>
<organism>
    <name type="scientific">Cupriavidus taiwanensis (strain DSM 17343 / BCRC 17206 / CCUG 44338 / CIP 107171 / LMG 19424 / R1)</name>
    <name type="common">Ralstonia taiwanensis (strain LMG 19424)</name>
    <dbReference type="NCBI Taxonomy" id="977880"/>
    <lineage>
        <taxon>Bacteria</taxon>
        <taxon>Pseudomonadati</taxon>
        <taxon>Pseudomonadota</taxon>
        <taxon>Betaproteobacteria</taxon>
        <taxon>Burkholderiales</taxon>
        <taxon>Burkholderiaceae</taxon>
        <taxon>Cupriavidus</taxon>
    </lineage>
</organism>
<sequence length="130" mass="14371">MNLIEQIEKEEIARLTANKTIPAFAPGDTVVVSVNVVEGNRKRVQAYEGVVIAKRNRGLNSSFIVRKISSGEGVERTFQLYSPLIAGIEVKRRGDVRRAKLYYLRQRSGKSARIKEKLVSKAAAAAKAAE</sequence>
<protein>
    <recommendedName>
        <fullName evidence="1">Large ribosomal subunit protein bL19</fullName>
    </recommendedName>
    <alternativeName>
        <fullName evidence="2">50S ribosomal protein L19</fullName>
    </alternativeName>
</protein>
<keyword id="KW-0687">Ribonucleoprotein</keyword>
<keyword id="KW-0689">Ribosomal protein</keyword>